<comment type="function">
    <text evidence="1">Part of the ABC transporter complex LolCDE involved in the translocation of mature outer membrane-directed lipoproteins, from the inner membrane to the periplasmic chaperone, LolA. Responsible for the formation of the LolA-lipoprotein complex in an ATP-dependent manner.</text>
</comment>
<comment type="subunit">
    <text evidence="1">The complex is composed of two ATP-binding proteins (LolD) and two transmembrane proteins (LolC and LolE).</text>
</comment>
<comment type="subcellular location">
    <subcellularLocation>
        <location evidence="1">Cell inner membrane</location>
        <topology evidence="1">Peripheral membrane protein</topology>
    </subcellularLocation>
</comment>
<comment type="similarity">
    <text evidence="1">Belongs to the ABC transporter superfamily. Lipoprotein translocase (TC 3.A.1.125) family.</text>
</comment>
<protein>
    <recommendedName>
        <fullName evidence="1">Lipoprotein-releasing system ATP-binding protein LolD</fullName>
        <ecNumber evidence="1">7.6.2.-</ecNumber>
    </recommendedName>
</protein>
<accession>Q4UMZ7</accession>
<organism>
    <name type="scientific">Rickettsia felis (strain ATCC VR-1525 / URRWXCal2)</name>
    <name type="common">Rickettsia azadi</name>
    <dbReference type="NCBI Taxonomy" id="315456"/>
    <lineage>
        <taxon>Bacteria</taxon>
        <taxon>Pseudomonadati</taxon>
        <taxon>Pseudomonadota</taxon>
        <taxon>Alphaproteobacteria</taxon>
        <taxon>Rickettsiales</taxon>
        <taxon>Rickettsiaceae</taxon>
        <taxon>Rickettsieae</taxon>
        <taxon>Rickettsia</taxon>
        <taxon>spotted fever group</taxon>
    </lineage>
</organism>
<proteinExistence type="inferred from homology"/>
<dbReference type="EC" id="7.6.2.-" evidence="1"/>
<dbReference type="EMBL" id="CP000053">
    <property type="protein sequence ID" value="AAY61061.1"/>
    <property type="molecule type" value="Genomic_DNA"/>
</dbReference>
<dbReference type="SMR" id="Q4UMZ7"/>
<dbReference type="STRING" id="315456.RF_0210"/>
<dbReference type="KEGG" id="rfe:RF_0210"/>
<dbReference type="eggNOG" id="COG1136">
    <property type="taxonomic scope" value="Bacteria"/>
</dbReference>
<dbReference type="HOGENOM" id="CLU_000604_1_22_5"/>
<dbReference type="OrthoDB" id="9802264at2"/>
<dbReference type="Proteomes" id="UP000008548">
    <property type="component" value="Chromosome"/>
</dbReference>
<dbReference type="GO" id="GO:0005886">
    <property type="term" value="C:plasma membrane"/>
    <property type="evidence" value="ECO:0007669"/>
    <property type="project" value="UniProtKB-SubCell"/>
</dbReference>
<dbReference type="GO" id="GO:0005524">
    <property type="term" value="F:ATP binding"/>
    <property type="evidence" value="ECO:0007669"/>
    <property type="project" value="UniProtKB-KW"/>
</dbReference>
<dbReference type="GO" id="GO:0016887">
    <property type="term" value="F:ATP hydrolysis activity"/>
    <property type="evidence" value="ECO:0007669"/>
    <property type="project" value="InterPro"/>
</dbReference>
<dbReference type="CDD" id="cd03255">
    <property type="entry name" value="ABC_MJ0796_LolCDE_FtsE"/>
    <property type="match status" value="1"/>
</dbReference>
<dbReference type="FunFam" id="3.40.50.300:FF:000032">
    <property type="entry name" value="Export ABC transporter ATP-binding protein"/>
    <property type="match status" value="1"/>
</dbReference>
<dbReference type="Gene3D" id="3.40.50.300">
    <property type="entry name" value="P-loop containing nucleotide triphosphate hydrolases"/>
    <property type="match status" value="1"/>
</dbReference>
<dbReference type="InterPro" id="IPR003593">
    <property type="entry name" value="AAA+_ATPase"/>
</dbReference>
<dbReference type="InterPro" id="IPR003439">
    <property type="entry name" value="ABC_transporter-like_ATP-bd"/>
</dbReference>
<dbReference type="InterPro" id="IPR017871">
    <property type="entry name" value="ABC_transporter-like_CS"/>
</dbReference>
<dbReference type="InterPro" id="IPR017911">
    <property type="entry name" value="MacB-like_ATP-bd"/>
</dbReference>
<dbReference type="InterPro" id="IPR027417">
    <property type="entry name" value="P-loop_NTPase"/>
</dbReference>
<dbReference type="PANTHER" id="PTHR42798:SF2">
    <property type="entry name" value="ABC TRANSPORTER ATP-BINDING PROTEIN MG467-RELATED"/>
    <property type="match status" value="1"/>
</dbReference>
<dbReference type="PANTHER" id="PTHR42798">
    <property type="entry name" value="LIPOPROTEIN-RELEASING SYSTEM ATP-BINDING PROTEIN LOLD"/>
    <property type="match status" value="1"/>
</dbReference>
<dbReference type="Pfam" id="PF00005">
    <property type="entry name" value="ABC_tran"/>
    <property type="match status" value="1"/>
</dbReference>
<dbReference type="SMART" id="SM00382">
    <property type="entry name" value="AAA"/>
    <property type="match status" value="1"/>
</dbReference>
<dbReference type="SUPFAM" id="SSF52540">
    <property type="entry name" value="P-loop containing nucleoside triphosphate hydrolases"/>
    <property type="match status" value="1"/>
</dbReference>
<dbReference type="PROSITE" id="PS00211">
    <property type="entry name" value="ABC_TRANSPORTER_1"/>
    <property type="match status" value="1"/>
</dbReference>
<dbReference type="PROSITE" id="PS50893">
    <property type="entry name" value="ABC_TRANSPORTER_2"/>
    <property type="match status" value="1"/>
</dbReference>
<dbReference type="PROSITE" id="PS51244">
    <property type="entry name" value="LOLD"/>
    <property type="match status" value="1"/>
</dbReference>
<sequence length="221" mass="24673">MNNTVLILKNISKHYSQGKTIVRVLDDLNLTVNEGELIAIIGSSGSGKSTLLHIAGLLDKPTNGQVIIPNSKYQKYHLIRLHYLGFIYQQHHLLKDFTALENVIMPRLISGLDQKEAIEDATKILDDLGLGKKLYNMPGELSGGEQQRVAIARSLINKPKIILADEPTGNLDPKTTNEVFNLFLKVAREQNTAVIMVTHNHELAHKMDKLYKLKHGLLNIA</sequence>
<keyword id="KW-0067">ATP-binding</keyword>
<keyword id="KW-0997">Cell inner membrane</keyword>
<keyword id="KW-1003">Cell membrane</keyword>
<keyword id="KW-0472">Membrane</keyword>
<keyword id="KW-0547">Nucleotide-binding</keyword>
<keyword id="KW-1278">Translocase</keyword>
<keyword id="KW-0813">Transport</keyword>
<reference key="1">
    <citation type="journal article" date="2005" name="PLoS Biol.">
        <title>The genome sequence of Rickettsia felis identifies the first putative conjugative plasmid in an obligate intracellular parasite.</title>
        <authorList>
            <person name="Ogata H."/>
            <person name="Renesto P."/>
            <person name="Audic S."/>
            <person name="Robert C."/>
            <person name="Blanc G."/>
            <person name="Fournier P.-E."/>
            <person name="Parinello H."/>
            <person name="Claverie J.-M."/>
            <person name="Raoult D."/>
        </authorList>
    </citation>
    <scope>NUCLEOTIDE SEQUENCE [LARGE SCALE GENOMIC DNA]</scope>
    <source>
        <strain>ATCC VR-1525 / URRWXCal2</strain>
    </source>
</reference>
<name>LOLD_RICFE</name>
<evidence type="ECO:0000255" key="1">
    <source>
        <dbReference type="HAMAP-Rule" id="MF_01708"/>
    </source>
</evidence>
<feature type="chain" id="PRO_0000260197" description="Lipoprotein-releasing system ATP-binding protein LolD">
    <location>
        <begin position="1"/>
        <end position="221"/>
    </location>
</feature>
<feature type="domain" description="ABC transporter" evidence="1">
    <location>
        <begin position="6"/>
        <end position="220"/>
    </location>
</feature>
<feature type="binding site" evidence="1">
    <location>
        <begin position="42"/>
        <end position="49"/>
    </location>
    <ligand>
        <name>ATP</name>
        <dbReference type="ChEBI" id="CHEBI:30616"/>
    </ligand>
</feature>
<gene>
    <name evidence="1" type="primary">lolD</name>
    <name type="ordered locus">RF_0210</name>
</gene>